<dbReference type="EMBL" id="CR380954">
    <property type="protein sequence ID" value="CAG60051.1"/>
    <property type="molecule type" value="Genomic_DNA"/>
</dbReference>
<dbReference type="RefSeq" id="XP_447118.1">
    <property type="nucleotide sequence ID" value="XM_447118.1"/>
</dbReference>
<dbReference type="SMR" id="Q6FRM6"/>
<dbReference type="FunCoup" id="Q6FRM6">
    <property type="interactions" value="73"/>
</dbReference>
<dbReference type="STRING" id="284593.Q6FRM6"/>
<dbReference type="EnsemblFungi" id="CAGL0H07381g-T">
    <property type="protein sequence ID" value="CAGL0H07381g-T-p1"/>
    <property type="gene ID" value="CAGL0H07381g"/>
</dbReference>
<dbReference type="KEGG" id="cgr:2888541"/>
<dbReference type="CGD" id="CAL0131540">
    <property type="gene designation" value="CAGL0H07381g"/>
</dbReference>
<dbReference type="VEuPathDB" id="FungiDB:CAGL0H07381g"/>
<dbReference type="eggNOG" id="KOG1869">
    <property type="taxonomic scope" value="Eukaryota"/>
</dbReference>
<dbReference type="HOGENOM" id="CLU_067891_2_0_1"/>
<dbReference type="InParanoid" id="Q6FRM6"/>
<dbReference type="OMA" id="RIEVKCM"/>
<dbReference type="Proteomes" id="UP000002428">
    <property type="component" value="Chromosome H"/>
</dbReference>
<dbReference type="GO" id="GO:0005737">
    <property type="term" value="C:cytoplasm"/>
    <property type="evidence" value="ECO:0007669"/>
    <property type="project" value="UniProtKB-SubCell"/>
</dbReference>
<dbReference type="GO" id="GO:0000974">
    <property type="term" value="C:Prp19 complex"/>
    <property type="evidence" value="ECO:0007669"/>
    <property type="project" value="EnsemblFungi"/>
</dbReference>
<dbReference type="GO" id="GO:0005684">
    <property type="term" value="C:U2-type spliceosomal complex"/>
    <property type="evidence" value="ECO:0007669"/>
    <property type="project" value="EnsemblFungi"/>
</dbReference>
<dbReference type="GO" id="GO:0000398">
    <property type="term" value="P:mRNA splicing, via spliceosome"/>
    <property type="evidence" value="ECO:0007669"/>
    <property type="project" value="EnsemblFungi"/>
</dbReference>
<dbReference type="CDD" id="cd21372">
    <property type="entry name" value="cwf21_CWC21-like"/>
    <property type="match status" value="1"/>
</dbReference>
<dbReference type="InterPro" id="IPR051372">
    <property type="entry name" value="CWC21"/>
</dbReference>
<dbReference type="InterPro" id="IPR013170">
    <property type="entry name" value="mRNA_splic_Cwf21_dom"/>
</dbReference>
<dbReference type="PANTHER" id="PTHR36562">
    <property type="entry name" value="SERINE/ARGININE REPETITIVE MATRIX 2"/>
    <property type="match status" value="1"/>
</dbReference>
<dbReference type="PANTHER" id="PTHR36562:SF5">
    <property type="entry name" value="SERINE_ARGININE REPETITIVE MATRIX 2"/>
    <property type="match status" value="1"/>
</dbReference>
<dbReference type="Pfam" id="PF08312">
    <property type="entry name" value="cwf21"/>
    <property type="match status" value="1"/>
</dbReference>
<dbReference type="SMART" id="SM01115">
    <property type="entry name" value="cwf21"/>
    <property type="match status" value="1"/>
</dbReference>
<proteinExistence type="inferred from homology"/>
<reference key="1">
    <citation type="journal article" date="2004" name="Nature">
        <title>Genome evolution in yeasts.</title>
        <authorList>
            <person name="Dujon B."/>
            <person name="Sherman D."/>
            <person name="Fischer G."/>
            <person name="Durrens P."/>
            <person name="Casaregola S."/>
            <person name="Lafontaine I."/>
            <person name="de Montigny J."/>
            <person name="Marck C."/>
            <person name="Neuveglise C."/>
            <person name="Talla E."/>
            <person name="Goffard N."/>
            <person name="Frangeul L."/>
            <person name="Aigle M."/>
            <person name="Anthouard V."/>
            <person name="Babour A."/>
            <person name="Barbe V."/>
            <person name="Barnay S."/>
            <person name="Blanchin S."/>
            <person name="Beckerich J.-M."/>
            <person name="Beyne E."/>
            <person name="Bleykasten C."/>
            <person name="Boisrame A."/>
            <person name="Boyer J."/>
            <person name="Cattolico L."/>
            <person name="Confanioleri F."/>
            <person name="de Daruvar A."/>
            <person name="Despons L."/>
            <person name="Fabre E."/>
            <person name="Fairhead C."/>
            <person name="Ferry-Dumazet H."/>
            <person name="Groppi A."/>
            <person name="Hantraye F."/>
            <person name="Hennequin C."/>
            <person name="Jauniaux N."/>
            <person name="Joyet P."/>
            <person name="Kachouri R."/>
            <person name="Kerrest A."/>
            <person name="Koszul R."/>
            <person name="Lemaire M."/>
            <person name="Lesur I."/>
            <person name="Ma L."/>
            <person name="Muller H."/>
            <person name="Nicaud J.-M."/>
            <person name="Nikolski M."/>
            <person name="Oztas S."/>
            <person name="Ozier-Kalogeropoulos O."/>
            <person name="Pellenz S."/>
            <person name="Potier S."/>
            <person name="Richard G.-F."/>
            <person name="Straub M.-L."/>
            <person name="Suleau A."/>
            <person name="Swennen D."/>
            <person name="Tekaia F."/>
            <person name="Wesolowski-Louvel M."/>
            <person name="Westhof E."/>
            <person name="Wirth B."/>
            <person name="Zeniou-Meyer M."/>
            <person name="Zivanovic Y."/>
            <person name="Bolotin-Fukuhara M."/>
            <person name="Thierry A."/>
            <person name="Bouchier C."/>
            <person name="Caudron B."/>
            <person name="Scarpelli C."/>
            <person name="Gaillardin C."/>
            <person name="Weissenbach J."/>
            <person name="Wincker P."/>
            <person name="Souciet J.-L."/>
        </authorList>
    </citation>
    <scope>NUCLEOTIDE SEQUENCE [LARGE SCALE GENOMIC DNA]</scope>
    <source>
        <strain>ATCC 2001 / BCRC 20586 / JCM 3761 / NBRC 0622 / NRRL Y-65 / CBS 138</strain>
    </source>
</reference>
<keyword id="KW-0175">Coiled coil</keyword>
<keyword id="KW-0963">Cytoplasm</keyword>
<keyword id="KW-0507">mRNA processing</keyword>
<keyword id="KW-0508">mRNA splicing</keyword>
<keyword id="KW-0539">Nucleus</keyword>
<keyword id="KW-1185">Reference proteome</keyword>
<keyword id="KW-0747">Spliceosome</keyword>
<gene>
    <name type="primary">CWC21</name>
    <name type="ordered locus">CAGL0H07381g</name>
</gene>
<comment type="function">
    <text evidence="1">Involved in pre-mRNA splicing. May function at or prior to the first catalytic step of splicing at the catalytic center of the spliceosome. May do so by stabilizing the catalytic center or the position of the RNA substrate (By similarity).</text>
</comment>
<comment type="subunit">
    <text evidence="1">Associates with the NTC complex (or PRP19-associated complex). The NTC complex associates with the spliceosome after the release of the U1 and U4 snRNAs and forms the CWC spliceosome subcomplex reminiscent of a late-stage spliceosome.</text>
</comment>
<comment type="subcellular location">
    <subcellularLocation>
        <location evidence="1">Cytoplasm</location>
    </subcellularLocation>
    <subcellularLocation>
        <location evidence="1">Nucleus</location>
    </subcellularLocation>
</comment>
<comment type="similarity">
    <text evidence="4">Belongs to the CWC21 family.</text>
</comment>
<organism>
    <name type="scientific">Candida glabrata (strain ATCC 2001 / BCRC 20586 / JCM 3761 / NBRC 0622 / NRRL Y-65 / CBS 138)</name>
    <name type="common">Yeast</name>
    <name type="synonym">Nakaseomyces glabratus</name>
    <dbReference type="NCBI Taxonomy" id="284593"/>
    <lineage>
        <taxon>Eukaryota</taxon>
        <taxon>Fungi</taxon>
        <taxon>Dikarya</taxon>
        <taxon>Ascomycota</taxon>
        <taxon>Saccharomycotina</taxon>
        <taxon>Saccharomycetes</taxon>
        <taxon>Saccharomycetales</taxon>
        <taxon>Saccharomycetaceae</taxon>
        <taxon>Nakaseomyces</taxon>
    </lineage>
</organism>
<accession>Q6FRM6</accession>
<evidence type="ECO:0000250" key="1"/>
<evidence type="ECO:0000255" key="2"/>
<evidence type="ECO:0000256" key="3">
    <source>
        <dbReference type="SAM" id="MobiDB-lite"/>
    </source>
</evidence>
<evidence type="ECO:0000305" key="4"/>
<sequence>MGRGVGLQSAKGSSTSGYVQRSLAHDNRDDKTGIVRLKNKNYELRKITKRSQKVDKPANESKDNGLKKVLVEHDKRREIEVQVSELRDSLEDKQDRNPDEWPDKRIDEECEKLRSTLLADLQEKEKYQKAYTPRSKRSSESSK</sequence>
<protein>
    <recommendedName>
        <fullName>Pre-mRNA-splicing factor CWC21</fullName>
    </recommendedName>
</protein>
<feature type="chain" id="PRO_0000123496" description="Pre-mRNA-splicing factor CWC21">
    <location>
        <begin position="1"/>
        <end position="143"/>
    </location>
</feature>
<feature type="domain" description="CWF21" evidence="2">
    <location>
        <begin position="71"/>
        <end position="120"/>
    </location>
</feature>
<feature type="region of interest" description="Disordered" evidence="3">
    <location>
        <begin position="1"/>
        <end position="74"/>
    </location>
</feature>
<feature type="region of interest" description="Disordered" evidence="3">
    <location>
        <begin position="87"/>
        <end position="107"/>
    </location>
</feature>
<feature type="region of interest" description="Disordered" evidence="3">
    <location>
        <begin position="123"/>
        <end position="143"/>
    </location>
</feature>
<feature type="coiled-coil region" evidence="2">
    <location>
        <begin position="72"/>
        <end position="129"/>
    </location>
</feature>
<feature type="compositionally biased region" description="Polar residues" evidence="3">
    <location>
        <begin position="10"/>
        <end position="19"/>
    </location>
</feature>
<feature type="compositionally biased region" description="Basic and acidic residues" evidence="3">
    <location>
        <begin position="23"/>
        <end position="33"/>
    </location>
</feature>
<feature type="compositionally biased region" description="Basic and acidic residues" evidence="3">
    <location>
        <begin position="40"/>
        <end position="74"/>
    </location>
</feature>
<name>CWC21_CANGA</name>